<proteinExistence type="evidence at transcript level"/>
<reference key="1">
    <citation type="submission" date="1993-11" db="EMBL/GenBank/DDBJ databases">
        <title>Cloning and characterization of an actin II gene from Pneumocystis carinii which encodes a centractin-like protein.</title>
        <authorList>
            <person name="Fletcher L.D."/>
            <person name="Tidwell R.R."/>
            <person name="Dykstra C.C."/>
        </authorList>
    </citation>
    <scope>NUCLEOTIDE SEQUENCE [MRNA]</scope>
</reference>
<protein>
    <recommendedName>
        <fullName>Actin-2</fullName>
    </recommendedName>
    <alternativeName>
        <fullName>Actin II</fullName>
    </alternativeName>
    <alternativeName>
        <fullName>Centractin-like protein</fullName>
    </alternativeName>
</protein>
<name>ACTZ_PNECA</name>
<accession>P42023</accession>
<feature type="chain" id="PRO_0000089065" description="Actin-2">
    <location>
        <begin position="1"/>
        <end position="385"/>
    </location>
</feature>
<organism>
    <name type="scientific">Pneumocystis carinii</name>
    <dbReference type="NCBI Taxonomy" id="4754"/>
    <lineage>
        <taxon>Eukaryota</taxon>
        <taxon>Fungi</taxon>
        <taxon>Dikarya</taxon>
        <taxon>Ascomycota</taxon>
        <taxon>Taphrinomycotina</taxon>
        <taxon>Pneumocystomycetes</taxon>
        <taxon>Pneumocystaceae</taxon>
        <taxon>Pneumocystis</taxon>
    </lineage>
</organism>
<evidence type="ECO:0000250" key="1"/>
<evidence type="ECO:0000305" key="2"/>
<comment type="subcellular location">
    <subcellularLocation>
        <location evidence="1">Cytoplasm</location>
        <location evidence="1">Cytoskeleton</location>
    </subcellularLocation>
</comment>
<comment type="similarity">
    <text evidence="2">Belongs to the actin family. ARP1 subfamily.</text>
</comment>
<dbReference type="EMBL" id="L21184">
    <property type="protein sequence ID" value="AAA33782.1"/>
    <property type="molecule type" value="mRNA"/>
</dbReference>
<dbReference type="SMR" id="P42023"/>
<dbReference type="VEuPathDB" id="FungiDB:T552_02018"/>
<dbReference type="GO" id="GO:0005737">
    <property type="term" value="C:cytoplasm"/>
    <property type="evidence" value="ECO:0007669"/>
    <property type="project" value="UniProtKB-KW"/>
</dbReference>
<dbReference type="GO" id="GO:0005856">
    <property type="term" value="C:cytoskeleton"/>
    <property type="evidence" value="ECO:0007669"/>
    <property type="project" value="UniProtKB-SubCell"/>
</dbReference>
<dbReference type="GO" id="GO:0005524">
    <property type="term" value="F:ATP binding"/>
    <property type="evidence" value="ECO:0007669"/>
    <property type="project" value="UniProtKB-KW"/>
</dbReference>
<dbReference type="CDD" id="cd10216">
    <property type="entry name" value="ASKHA_NBD_Arp1"/>
    <property type="match status" value="1"/>
</dbReference>
<dbReference type="FunFam" id="3.30.420.40:FF:000188">
    <property type="entry name" value="Actin like 6B"/>
    <property type="match status" value="1"/>
</dbReference>
<dbReference type="FunFam" id="3.90.640.10:FF:000015">
    <property type="entry name" value="Actin-like protein"/>
    <property type="match status" value="1"/>
</dbReference>
<dbReference type="Gene3D" id="3.30.420.40">
    <property type="match status" value="2"/>
</dbReference>
<dbReference type="Gene3D" id="3.90.640.10">
    <property type="entry name" value="Actin, Chain A, domain 4"/>
    <property type="match status" value="1"/>
</dbReference>
<dbReference type="InterPro" id="IPR004000">
    <property type="entry name" value="Actin"/>
</dbReference>
<dbReference type="InterPro" id="IPR020902">
    <property type="entry name" value="Actin/actin-like_CS"/>
</dbReference>
<dbReference type="InterPro" id="IPR043129">
    <property type="entry name" value="ATPase_NBD"/>
</dbReference>
<dbReference type="PANTHER" id="PTHR11937">
    <property type="entry name" value="ACTIN"/>
    <property type="match status" value="1"/>
</dbReference>
<dbReference type="Pfam" id="PF00022">
    <property type="entry name" value="Actin"/>
    <property type="match status" value="1"/>
</dbReference>
<dbReference type="PRINTS" id="PR00190">
    <property type="entry name" value="ACTIN"/>
</dbReference>
<dbReference type="SMART" id="SM00268">
    <property type="entry name" value="ACTIN"/>
    <property type="match status" value="1"/>
</dbReference>
<dbReference type="SUPFAM" id="SSF53067">
    <property type="entry name" value="Actin-like ATPase domain"/>
    <property type="match status" value="2"/>
</dbReference>
<dbReference type="PROSITE" id="PS01132">
    <property type="entry name" value="ACTINS_ACT_LIKE"/>
    <property type="match status" value="1"/>
</dbReference>
<sequence length="385" mass="43211">MEFNDVLTNQPICIDNGSGVIKAGFAGEDQPKSFFPSYVGRPKHLKIMAGAIEGDIFIGNKAQELRGLLKIKYPIEHGIVVDWDDMERIWQFIYTEELKTVSEEHPVLLTEAPLNPRTNRDQAAQVFFETFNVPALFTSIQAVLSLYASGRTTGVVLDSGDGVTHAVPIYEGFAMPSAIRRIDIAGRDVTEYLQLLLRKSGTIFHTSAEKEIVRIIKEKCSYVTLDPRKEEKEWINASISGGKDYTKEEEFKLPDGNVLRLGAERFRAPEILFDPEIIGSEYSGIHQVVVDAISRVDLDLRKSLFGNIVLSGGSTLTRGFGDRLLSEIRRLAVKDVKIKIFAPPERKYSTWIGGSILASLSTFRKMWVSAEEYQEDPDIIHRKSI</sequence>
<keyword id="KW-0067">ATP-binding</keyword>
<keyword id="KW-0963">Cytoplasm</keyword>
<keyword id="KW-0206">Cytoskeleton</keyword>
<keyword id="KW-0547">Nucleotide-binding</keyword>